<protein>
    <recommendedName>
        <fullName evidence="7">Serine/threonine-protein phosphatase PP1 isozyme 6</fullName>
        <ecNumber evidence="4">3.1.3.16</ecNumber>
    </recommendedName>
    <alternativeName>
        <fullName evidence="5">Type one protein phosphatase 6</fullName>
    </alternativeName>
</protein>
<sequence length="322" mass="36567">MDETLLDDIIRRLLATNNGRTVKQAQITETEIRQLCLASKEVFLSQPNLLELEAPIKICGDVHGQFPDLLRLFEYGGYPPAANYLFLGDYVDRGKQSIETICLLLAYKVKYKFNFFLLRGNHECASINRVYGFYDECKRRYNVRLWKTFTECFNCLPVSALIDDKILCMHGGLSPDIKSLDDIRRIPRPIDVPDQGILCDLLWADPDREIQGWGENDRGVSYTFGADKVAEFLQTHDLDLICRAHQVVEDGYEFFAKRQLVTIFSAPNYCGEFDNAGALMSVDDSLTCSFQILKASEKKGRFGFNNNVPRPGTPPHKGGKGR</sequence>
<dbReference type="EC" id="3.1.3.16" evidence="4"/>
<dbReference type="EMBL" id="Z46253">
    <property type="protein sequence ID" value="CAA86339.1"/>
    <property type="molecule type" value="mRNA"/>
</dbReference>
<dbReference type="EMBL" id="U80921">
    <property type="protein sequence ID" value="AAC39460.1"/>
    <property type="molecule type" value="Genomic_DNA"/>
</dbReference>
<dbReference type="EMBL" id="AL096882">
    <property type="protein sequence ID" value="CAB51408.1"/>
    <property type="status" value="ALT_SEQ"/>
    <property type="molecule type" value="Genomic_DNA"/>
</dbReference>
<dbReference type="EMBL" id="AL161531">
    <property type="protein sequence ID" value="CAB81225.1"/>
    <property type="status" value="ALT_SEQ"/>
    <property type="molecule type" value="Genomic_DNA"/>
</dbReference>
<dbReference type="EMBL" id="CP002687">
    <property type="protein sequence ID" value="AEE82988.1"/>
    <property type="molecule type" value="Genomic_DNA"/>
</dbReference>
<dbReference type="EMBL" id="AY090365">
    <property type="protein sequence ID" value="AAL91268.1"/>
    <property type="molecule type" value="mRNA"/>
</dbReference>
<dbReference type="EMBL" id="AY122904">
    <property type="protein sequence ID" value="AAM67437.1"/>
    <property type="molecule type" value="mRNA"/>
</dbReference>
<dbReference type="EMBL" id="AY086060">
    <property type="protein sequence ID" value="AAM63269.1"/>
    <property type="molecule type" value="mRNA"/>
</dbReference>
<dbReference type="PIR" id="T13015">
    <property type="entry name" value="T13015"/>
</dbReference>
<dbReference type="RefSeq" id="NP_567375.1">
    <property type="nucleotide sequence ID" value="NM_117195.5"/>
</dbReference>
<dbReference type="SMR" id="P48486"/>
<dbReference type="BioGRID" id="12025">
    <property type="interactions" value="4"/>
</dbReference>
<dbReference type="FunCoup" id="P48486">
    <property type="interactions" value="2498"/>
</dbReference>
<dbReference type="IntAct" id="P48486">
    <property type="interactions" value="2"/>
</dbReference>
<dbReference type="STRING" id="3702.P48486"/>
<dbReference type="iPTMnet" id="P48486"/>
<dbReference type="PaxDb" id="3702-AT4G11240.1"/>
<dbReference type="ProteomicsDB" id="249140"/>
<dbReference type="EnsemblPlants" id="AT4G11240.1">
    <property type="protein sequence ID" value="AT4G11240.1"/>
    <property type="gene ID" value="AT4G11240"/>
</dbReference>
<dbReference type="GeneID" id="826726"/>
<dbReference type="Gramene" id="AT4G11240.1">
    <property type="protein sequence ID" value="AT4G11240.1"/>
    <property type="gene ID" value="AT4G11240"/>
</dbReference>
<dbReference type="KEGG" id="ath:AT4G11240"/>
<dbReference type="Araport" id="AT4G11240"/>
<dbReference type="TAIR" id="AT4G11240">
    <property type="gene designation" value="TOPP7"/>
</dbReference>
<dbReference type="eggNOG" id="KOG0374">
    <property type="taxonomic scope" value="Eukaryota"/>
</dbReference>
<dbReference type="HOGENOM" id="CLU_004962_0_0_1"/>
<dbReference type="InParanoid" id="P48486"/>
<dbReference type="OMA" id="VKYKFNF"/>
<dbReference type="OrthoDB" id="1930084at2759"/>
<dbReference type="PhylomeDB" id="P48486"/>
<dbReference type="PRO" id="PR:P48486"/>
<dbReference type="Proteomes" id="UP000006548">
    <property type="component" value="Chromosome 4"/>
</dbReference>
<dbReference type="ExpressionAtlas" id="P48486">
    <property type="expression patterns" value="baseline and differential"/>
</dbReference>
<dbReference type="GO" id="GO:0005737">
    <property type="term" value="C:cytoplasm"/>
    <property type="evidence" value="ECO:0007669"/>
    <property type="project" value="UniProtKB-SubCell"/>
</dbReference>
<dbReference type="GO" id="GO:0005634">
    <property type="term" value="C:nucleus"/>
    <property type="evidence" value="ECO:0007669"/>
    <property type="project" value="UniProtKB-SubCell"/>
</dbReference>
<dbReference type="GO" id="GO:0046872">
    <property type="term" value="F:metal ion binding"/>
    <property type="evidence" value="ECO:0007669"/>
    <property type="project" value="UniProtKB-KW"/>
</dbReference>
<dbReference type="GO" id="GO:0004722">
    <property type="term" value="F:protein serine/threonine phosphatase activity"/>
    <property type="evidence" value="ECO:0000314"/>
    <property type="project" value="TAIR"/>
</dbReference>
<dbReference type="CDD" id="cd07414">
    <property type="entry name" value="MPP_PP1_PPKL"/>
    <property type="match status" value="1"/>
</dbReference>
<dbReference type="FunFam" id="3.60.21.10:FF:000026">
    <property type="entry name" value="Serine/threonine-protein phosphatase"/>
    <property type="match status" value="1"/>
</dbReference>
<dbReference type="Gene3D" id="3.60.21.10">
    <property type="match status" value="1"/>
</dbReference>
<dbReference type="InterPro" id="IPR004843">
    <property type="entry name" value="Calcineurin-like_PHP_ApaH"/>
</dbReference>
<dbReference type="InterPro" id="IPR029052">
    <property type="entry name" value="Metallo-depent_PP-like"/>
</dbReference>
<dbReference type="InterPro" id="IPR050341">
    <property type="entry name" value="PP1_catalytic_subunit"/>
</dbReference>
<dbReference type="InterPro" id="IPR006186">
    <property type="entry name" value="Ser/Thr-sp_prot-phosphatase"/>
</dbReference>
<dbReference type="InterPro" id="IPR031675">
    <property type="entry name" value="STPPase_N"/>
</dbReference>
<dbReference type="PANTHER" id="PTHR11668">
    <property type="entry name" value="SERINE/THREONINE PROTEIN PHOSPHATASE"/>
    <property type="match status" value="1"/>
</dbReference>
<dbReference type="PANTHER" id="PTHR11668:SF504">
    <property type="entry name" value="SERINE_THREONINE-PROTEIN PHOSPHATASE PP1 ISOZYME 6"/>
    <property type="match status" value="1"/>
</dbReference>
<dbReference type="Pfam" id="PF00149">
    <property type="entry name" value="Metallophos"/>
    <property type="match status" value="1"/>
</dbReference>
<dbReference type="Pfam" id="PF16891">
    <property type="entry name" value="STPPase_N"/>
    <property type="match status" value="1"/>
</dbReference>
<dbReference type="PRINTS" id="PR00114">
    <property type="entry name" value="STPHPHTASE"/>
</dbReference>
<dbReference type="SMART" id="SM00156">
    <property type="entry name" value="PP2Ac"/>
    <property type="match status" value="1"/>
</dbReference>
<dbReference type="SUPFAM" id="SSF56300">
    <property type="entry name" value="Metallo-dependent phosphatases"/>
    <property type="match status" value="1"/>
</dbReference>
<dbReference type="PROSITE" id="PS00125">
    <property type="entry name" value="SER_THR_PHOSPHATASE"/>
    <property type="match status" value="1"/>
</dbReference>
<accession>P48486</accession>
<accession>Q8RX64</accession>
<accession>Q9SUT7</accession>
<keyword id="KW-0007">Acetylation</keyword>
<keyword id="KW-0963">Cytoplasm</keyword>
<keyword id="KW-0378">Hydrolase</keyword>
<keyword id="KW-0464">Manganese</keyword>
<keyword id="KW-0479">Metal-binding</keyword>
<keyword id="KW-0539">Nucleus</keyword>
<keyword id="KW-0904">Protein phosphatase</keyword>
<keyword id="KW-1185">Reference proteome</keyword>
<evidence type="ECO:0000250" key="1"/>
<evidence type="ECO:0000256" key="2">
    <source>
        <dbReference type="SAM" id="MobiDB-lite"/>
    </source>
</evidence>
<evidence type="ECO:0000269" key="3">
    <source>
    </source>
</evidence>
<evidence type="ECO:0000269" key="4">
    <source>
    </source>
</evidence>
<evidence type="ECO:0000303" key="5">
    <source>
    </source>
</evidence>
<evidence type="ECO:0000303" key="6">
    <source>
    </source>
</evidence>
<evidence type="ECO:0000305" key="7"/>
<evidence type="ECO:0000312" key="8">
    <source>
        <dbReference type="Araport" id="AT4G11240"/>
    </source>
</evidence>
<evidence type="ECO:0000312" key="9">
    <source>
        <dbReference type="EMBL" id="CAA86339.1"/>
    </source>
</evidence>
<evidence type="ECO:0000312" key="10">
    <source>
        <dbReference type="EMBL" id="CAB51408.1"/>
    </source>
</evidence>
<evidence type="ECO:0007744" key="11">
    <source>
    </source>
</evidence>
<comment type="function">
    <text evidence="4">Serine/threonine-protein phosphatase that possesses phosphatase activity toward para-nitrophenyl phosphate (pNPP) in vitro.</text>
</comment>
<comment type="catalytic activity">
    <reaction evidence="4">
        <text>O-phospho-L-seryl-[protein] + H2O = L-seryl-[protein] + phosphate</text>
        <dbReference type="Rhea" id="RHEA:20629"/>
        <dbReference type="Rhea" id="RHEA-COMP:9863"/>
        <dbReference type="Rhea" id="RHEA-COMP:11604"/>
        <dbReference type="ChEBI" id="CHEBI:15377"/>
        <dbReference type="ChEBI" id="CHEBI:29999"/>
        <dbReference type="ChEBI" id="CHEBI:43474"/>
        <dbReference type="ChEBI" id="CHEBI:83421"/>
        <dbReference type="EC" id="3.1.3.16"/>
    </reaction>
</comment>
<comment type="catalytic activity">
    <reaction evidence="4">
        <text>O-phospho-L-threonyl-[protein] + H2O = L-threonyl-[protein] + phosphate</text>
        <dbReference type="Rhea" id="RHEA:47004"/>
        <dbReference type="Rhea" id="RHEA-COMP:11060"/>
        <dbReference type="Rhea" id="RHEA-COMP:11605"/>
        <dbReference type="ChEBI" id="CHEBI:15377"/>
        <dbReference type="ChEBI" id="CHEBI:30013"/>
        <dbReference type="ChEBI" id="CHEBI:43474"/>
        <dbReference type="ChEBI" id="CHEBI:61977"/>
        <dbReference type="EC" id="3.1.3.16"/>
    </reaction>
</comment>
<comment type="cofactor">
    <cofactor evidence="1">
        <name>Mn(2+)</name>
        <dbReference type="ChEBI" id="CHEBI:29035"/>
    </cofactor>
    <text evidence="1">Binds 2 manganese ions per subunit.</text>
</comment>
<comment type="activity regulation">
    <text evidence="4">Phosphatase activity is strongly reduced by the protein phosphatase inhibitor 2 (I-2).</text>
</comment>
<comment type="subcellular location">
    <subcellularLocation>
        <location evidence="3">Nucleus</location>
    </subcellularLocation>
    <subcellularLocation>
        <location evidence="3">Cytoplasm</location>
    </subcellularLocation>
</comment>
<comment type="tissue specificity">
    <text>Strongly up-regulated within developing flowers, especially in the tapetum, the developing and mature pollen and in the ovaries.</text>
</comment>
<comment type="similarity">
    <text evidence="7">Belongs to the PPP phosphatase family. PP-1 subfamily.</text>
</comment>
<comment type="sequence caution" evidence="7">
    <conflict type="erroneous gene model prediction">
        <sequence resource="EMBL-CDS" id="CAB51408"/>
    </conflict>
</comment>
<comment type="sequence caution" evidence="7">
    <conflict type="erroneous gene model prediction">
        <sequence resource="EMBL-CDS" id="CAB81225"/>
    </conflict>
</comment>
<gene>
    <name evidence="5" type="primary">TOPP6</name>
    <name evidence="9" type="synonym">PP1BG</name>
    <name evidence="6" type="synonym">TOPP7</name>
    <name evidence="8" type="ordered locus">At4g11240</name>
    <name evidence="10" type="ORF">F8L21.30</name>
</gene>
<name>PP16_ARATH</name>
<feature type="chain" id="PRO_0000058802" description="Serine/threonine-protein phosphatase PP1 isozyme 6">
    <location>
        <begin position="1"/>
        <end position="322"/>
    </location>
</feature>
<feature type="region of interest" description="Disordered" evidence="2">
    <location>
        <begin position="303"/>
        <end position="322"/>
    </location>
</feature>
<feature type="active site" description="Proton donor" evidence="1">
    <location>
        <position position="122"/>
    </location>
</feature>
<feature type="binding site" evidence="1">
    <location>
        <position position="61"/>
    </location>
    <ligand>
        <name>Mn(2+)</name>
        <dbReference type="ChEBI" id="CHEBI:29035"/>
        <label>1</label>
    </ligand>
</feature>
<feature type="binding site" evidence="1">
    <location>
        <position position="63"/>
    </location>
    <ligand>
        <name>Mn(2+)</name>
        <dbReference type="ChEBI" id="CHEBI:29035"/>
        <label>1</label>
    </ligand>
</feature>
<feature type="binding site" evidence="1">
    <location>
        <position position="89"/>
    </location>
    <ligand>
        <name>Mn(2+)</name>
        <dbReference type="ChEBI" id="CHEBI:29035"/>
        <label>1</label>
    </ligand>
</feature>
<feature type="binding site" evidence="1">
    <location>
        <position position="89"/>
    </location>
    <ligand>
        <name>Mn(2+)</name>
        <dbReference type="ChEBI" id="CHEBI:29035"/>
        <label>2</label>
    </ligand>
</feature>
<feature type="binding site" evidence="1">
    <location>
        <position position="121"/>
    </location>
    <ligand>
        <name>Mn(2+)</name>
        <dbReference type="ChEBI" id="CHEBI:29035"/>
        <label>2</label>
    </ligand>
</feature>
<feature type="binding site" evidence="1">
    <location>
        <position position="170"/>
    </location>
    <ligand>
        <name>Mn(2+)</name>
        <dbReference type="ChEBI" id="CHEBI:29035"/>
        <label>2</label>
    </ligand>
</feature>
<feature type="binding site" evidence="1">
    <location>
        <position position="245"/>
    </location>
    <ligand>
        <name>Mn(2+)</name>
        <dbReference type="ChEBI" id="CHEBI:29035"/>
        <label>2</label>
    </ligand>
</feature>
<feature type="modified residue" description="N-acetylmethionine" evidence="11">
    <location>
        <position position="1"/>
    </location>
</feature>
<feature type="sequence conflict" description="In Ref. 1; CAA86339 and 2; AAC39460." evidence="7" ref="1 2">
    <original>V</original>
    <variation>D</variation>
    <location>
        <position position="248"/>
    </location>
</feature>
<organism>
    <name type="scientific">Arabidopsis thaliana</name>
    <name type="common">Mouse-ear cress</name>
    <dbReference type="NCBI Taxonomy" id="3702"/>
    <lineage>
        <taxon>Eukaryota</taxon>
        <taxon>Viridiplantae</taxon>
        <taxon>Streptophyta</taxon>
        <taxon>Embryophyta</taxon>
        <taxon>Tracheophyta</taxon>
        <taxon>Spermatophyta</taxon>
        <taxon>Magnoliopsida</taxon>
        <taxon>eudicotyledons</taxon>
        <taxon>Gunneridae</taxon>
        <taxon>Pentapetalae</taxon>
        <taxon>rosids</taxon>
        <taxon>malvids</taxon>
        <taxon>Brassicales</taxon>
        <taxon>Brassicaceae</taxon>
        <taxon>Camelineae</taxon>
        <taxon>Arabidopsis</taxon>
    </lineage>
</organism>
<reference key="1">
    <citation type="journal article" date="1995" name="Plant J.">
        <title>A novel Arabidopsis type 1 protein phosphatase is highly expressed in male and female tissues and functionally complements a conditional cell cycle mutant of Aspergillus.</title>
        <authorList>
            <person name="Arundhati A."/>
            <person name="Feiler H."/>
            <person name="Traas J."/>
            <person name="Zhang H."/>
            <person name="Lunness P.A."/>
            <person name="Doonan J.H."/>
        </authorList>
    </citation>
    <scope>NUCLEOTIDE SEQUENCE [MRNA]</scope>
</reference>
<reference key="2">
    <citation type="journal article" date="1998" name="Plant Mol. Biol.">
        <title>Molecular cloning and chromosomal mapping of type one serine/threonine protein phosphatases in Arabidopsis thaliana.</title>
        <authorList>
            <person name="Lin Q."/>
            <person name="Li J."/>
            <person name="Smith R.D."/>
            <person name="Walker J.C."/>
        </authorList>
    </citation>
    <scope>NUCLEOTIDE SEQUENCE [GENOMIC DNA]</scope>
</reference>
<reference key="3">
    <citation type="journal article" date="1999" name="Nature">
        <title>Sequence and analysis of chromosome 4 of the plant Arabidopsis thaliana.</title>
        <authorList>
            <person name="Mayer K.F.X."/>
            <person name="Schueller C."/>
            <person name="Wambutt R."/>
            <person name="Murphy G."/>
            <person name="Volckaert G."/>
            <person name="Pohl T."/>
            <person name="Duesterhoeft A."/>
            <person name="Stiekema W."/>
            <person name="Entian K.-D."/>
            <person name="Terryn N."/>
            <person name="Harris B."/>
            <person name="Ansorge W."/>
            <person name="Brandt P."/>
            <person name="Grivell L.A."/>
            <person name="Rieger M."/>
            <person name="Weichselgartner M."/>
            <person name="de Simone V."/>
            <person name="Obermaier B."/>
            <person name="Mache R."/>
            <person name="Mueller M."/>
            <person name="Kreis M."/>
            <person name="Delseny M."/>
            <person name="Puigdomenech P."/>
            <person name="Watson M."/>
            <person name="Schmidtheini T."/>
            <person name="Reichert B."/>
            <person name="Portetelle D."/>
            <person name="Perez-Alonso M."/>
            <person name="Boutry M."/>
            <person name="Bancroft I."/>
            <person name="Vos P."/>
            <person name="Hoheisel J."/>
            <person name="Zimmermann W."/>
            <person name="Wedler H."/>
            <person name="Ridley P."/>
            <person name="Langham S.-A."/>
            <person name="McCullagh B."/>
            <person name="Bilham L."/>
            <person name="Robben J."/>
            <person name="van der Schueren J."/>
            <person name="Grymonprez B."/>
            <person name="Chuang Y.-J."/>
            <person name="Vandenbussche F."/>
            <person name="Braeken M."/>
            <person name="Weltjens I."/>
            <person name="Voet M."/>
            <person name="Bastiaens I."/>
            <person name="Aert R."/>
            <person name="Defoor E."/>
            <person name="Weitzenegger T."/>
            <person name="Bothe G."/>
            <person name="Ramsperger U."/>
            <person name="Hilbert H."/>
            <person name="Braun M."/>
            <person name="Holzer E."/>
            <person name="Brandt A."/>
            <person name="Peters S."/>
            <person name="van Staveren M."/>
            <person name="Dirkse W."/>
            <person name="Mooijman P."/>
            <person name="Klein Lankhorst R."/>
            <person name="Rose M."/>
            <person name="Hauf J."/>
            <person name="Koetter P."/>
            <person name="Berneiser S."/>
            <person name="Hempel S."/>
            <person name="Feldpausch M."/>
            <person name="Lamberth S."/>
            <person name="Van den Daele H."/>
            <person name="De Keyser A."/>
            <person name="Buysshaert C."/>
            <person name="Gielen J."/>
            <person name="Villarroel R."/>
            <person name="De Clercq R."/>
            <person name="van Montagu M."/>
            <person name="Rogers J."/>
            <person name="Cronin A."/>
            <person name="Quail M.A."/>
            <person name="Bray-Allen S."/>
            <person name="Clark L."/>
            <person name="Doggett J."/>
            <person name="Hall S."/>
            <person name="Kay M."/>
            <person name="Lennard N."/>
            <person name="McLay K."/>
            <person name="Mayes R."/>
            <person name="Pettett A."/>
            <person name="Rajandream M.A."/>
            <person name="Lyne M."/>
            <person name="Benes V."/>
            <person name="Rechmann S."/>
            <person name="Borkova D."/>
            <person name="Bloecker H."/>
            <person name="Scharfe M."/>
            <person name="Grimm M."/>
            <person name="Loehnert T.-H."/>
            <person name="Dose S."/>
            <person name="de Haan M."/>
            <person name="Maarse A.C."/>
            <person name="Schaefer M."/>
            <person name="Mueller-Auer S."/>
            <person name="Gabel C."/>
            <person name="Fuchs M."/>
            <person name="Fartmann B."/>
            <person name="Granderath K."/>
            <person name="Dauner D."/>
            <person name="Herzl A."/>
            <person name="Neumann S."/>
            <person name="Argiriou A."/>
            <person name="Vitale D."/>
            <person name="Liguori R."/>
            <person name="Piravandi E."/>
            <person name="Massenet O."/>
            <person name="Quigley F."/>
            <person name="Clabauld G."/>
            <person name="Muendlein A."/>
            <person name="Felber R."/>
            <person name="Schnabl S."/>
            <person name="Hiller R."/>
            <person name="Schmidt W."/>
            <person name="Lecharny A."/>
            <person name="Aubourg S."/>
            <person name="Chefdor F."/>
            <person name="Cooke R."/>
            <person name="Berger C."/>
            <person name="Monfort A."/>
            <person name="Casacuberta E."/>
            <person name="Gibbons T."/>
            <person name="Weber N."/>
            <person name="Vandenbol M."/>
            <person name="Bargues M."/>
            <person name="Terol J."/>
            <person name="Torres A."/>
            <person name="Perez-Perez A."/>
            <person name="Purnelle B."/>
            <person name="Bent E."/>
            <person name="Johnson S."/>
            <person name="Tacon D."/>
            <person name="Jesse T."/>
            <person name="Heijnen L."/>
            <person name="Schwarz S."/>
            <person name="Scholler P."/>
            <person name="Heber S."/>
            <person name="Francs P."/>
            <person name="Bielke C."/>
            <person name="Frishman D."/>
            <person name="Haase D."/>
            <person name="Lemcke K."/>
            <person name="Mewes H.-W."/>
            <person name="Stocker S."/>
            <person name="Zaccaria P."/>
            <person name="Bevan M."/>
            <person name="Wilson R.K."/>
            <person name="de la Bastide M."/>
            <person name="Habermann K."/>
            <person name="Parnell L."/>
            <person name="Dedhia N."/>
            <person name="Gnoj L."/>
            <person name="Schutz K."/>
            <person name="Huang E."/>
            <person name="Spiegel L."/>
            <person name="Sekhon M."/>
            <person name="Murray J."/>
            <person name="Sheet P."/>
            <person name="Cordes M."/>
            <person name="Abu-Threideh J."/>
            <person name="Stoneking T."/>
            <person name="Kalicki J."/>
            <person name="Graves T."/>
            <person name="Harmon G."/>
            <person name="Edwards J."/>
            <person name="Latreille P."/>
            <person name="Courtney L."/>
            <person name="Cloud J."/>
            <person name="Abbott A."/>
            <person name="Scott K."/>
            <person name="Johnson D."/>
            <person name="Minx P."/>
            <person name="Bentley D."/>
            <person name="Fulton B."/>
            <person name="Miller N."/>
            <person name="Greco T."/>
            <person name="Kemp K."/>
            <person name="Kramer J."/>
            <person name="Fulton L."/>
            <person name="Mardis E."/>
            <person name="Dante M."/>
            <person name="Pepin K."/>
            <person name="Hillier L.W."/>
            <person name="Nelson J."/>
            <person name="Spieth J."/>
            <person name="Ryan E."/>
            <person name="Andrews S."/>
            <person name="Geisel C."/>
            <person name="Layman D."/>
            <person name="Du H."/>
            <person name="Ali J."/>
            <person name="Berghoff A."/>
            <person name="Jones K."/>
            <person name="Drone K."/>
            <person name="Cotton M."/>
            <person name="Joshu C."/>
            <person name="Antonoiu B."/>
            <person name="Zidanic M."/>
            <person name="Strong C."/>
            <person name="Sun H."/>
            <person name="Lamar B."/>
            <person name="Yordan C."/>
            <person name="Ma P."/>
            <person name="Zhong J."/>
            <person name="Preston R."/>
            <person name="Vil D."/>
            <person name="Shekher M."/>
            <person name="Matero A."/>
            <person name="Shah R."/>
            <person name="Swaby I.K."/>
            <person name="O'Shaughnessy A."/>
            <person name="Rodriguez M."/>
            <person name="Hoffman J."/>
            <person name="Till S."/>
            <person name="Granat S."/>
            <person name="Shohdy N."/>
            <person name="Hasegawa A."/>
            <person name="Hameed A."/>
            <person name="Lodhi M."/>
            <person name="Johnson A."/>
            <person name="Chen E."/>
            <person name="Marra M.A."/>
            <person name="Martienssen R."/>
            <person name="McCombie W.R."/>
        </authorList>
    </citation>
    <scope>NUCLEOTIDE SEQUENCE [LARGE SCALE GENOMIC DNA]</scope>
    <source>
        <strain>cv. Columbia</strain>
    </source>
</reference>
<reference key="4">
    <citation type="journal article" date="2017" name="Plant J.">
        <title>Araport11: a complete reannotation of the Arabidopsis thaliana reference genome.</title>
        <authorList>
            <person name="Cheng C.Y."/>
            <person name="Krishnakumar V."/>
            <person name="Chan A.P."/>
            <person name="Thibaud-Nissen F."/>
            <person name="Schobel S."/>
            <person name="Town C.D."/>
        </authorList>
    </citation>
    <scope>GENOME REANNOTATION</scope>
    <source>
        <strain>cv. Columbia</strain>
    </source>
</reference>
<reference key="5">
    <citation type="journal article" date="2003" name="Science">
        <title>Empirical analysis of transcriptional activity in the Arabidopsis genome.</title>
        <authorList>
            <person name="Yamada K."/>
            <person name="Lim J."/>
            <person name="Dale J.M."/>
            <person name="Chen H."/>
            <person name="Shinn P."/>
            <person name="Palm C.J."/>
            <person name="Southwick A.M."/>
            <person name="Wu H.C."/>
            <person name="Kim C.J."/>
            <person name="Nguyen M."/>
            <person name="Pham P.K."/>
            <person name="Cheuk R.F."/>
            <person name="Karlin-Newmann G."/>
            <person name="Liu S.X."/>
            <person name="Lam B."/>
            <person name="Sakano H."/>
            <person name="Wu T."/>
            <person name="Yu G."/>
            <person name="Miranda M."/>
            <person name="Quach H.L."/>
            <person name="Tripp M."/>
            <person name="Chang C.H."/>
            <person name="Lee J.M."/>
            <person name="Toriumi M.J."/>
            <person name="Chan M.M."/>
            <person name="Tang C.C."/>
            <person name="Onodera C.S."/>
            <person name="Deng J.M."/>
            <person name="Akiyama K."/>
            <person name="Ansari Y."/>
            <person name="Arakawa T."/>
            <person name="Banh J."/>
            <person name="Banno F."/>
            <person name="Bowser L."/>
            <person name="Brooks S.Y."/>
            <person name="Carninci P."/>
            <person name="Chao Q."/>
            <person name="Choy N."/>
            <person name="Enju A."/>
            <person name="Goldsmith A.D."/>
            <person name="Gurjal M."/>
            <person name="Hansen N.F."/>
            <person name="Hayashizaki Y."/>
            <person name="Johnson-Hopson C."/>
            <person name="Hsuan V.W."/>
            <person name="Iida K."/>
            <person name="Karnes M."/>
            <person name="Khan S."/>
            <person name="Koesema E."/>
            <person name="Ishida J."/>
            <person name="Jiang P.X."/>
            <person name="Jones T."/>
            <person name="Kawai J."/>
            <person name="Kamiya A."/>
            <person name="Meyers C."/>
            <person name="Nakajima M."/>
            <person name="Narusaka M."/>
            <person name="Seki M."/>
            <person name="Sakurai T."/>
            <person name="Satou M."/>
            <person name="Tamse R."/>
            <person name="Vaysberg M."/>
            <person name="Wallender E.K."/>
            <person name="Wong C."/>
            <person name="Yamamura Y."/>
            <person name="Yuan S."/>
            <person name="Shinozaki K."/>
            <person name="Davis R.W."/>
            <person name="Theologis A."/>
            <person name="Ecker J.R."/>
        </authorList>
    </citation>
    <scope>NUCLEOTIDE SEQUENCE [LARGE SCALE MRNA]</scope>
    <source>
        <strain>cv. Columbia</strain>
    </source>
</reference>
<reference key="6">
    <citation type="submission" date="2002-03" db="EMBL/GenBank/DDBJ databases">
        <title>Full-length cDNA from Arabidopsis thaliana.</title>
        <authorList>
            <person name="Brover V.V."/>
            <person name="Troukhan M.E."/>
            <person name="Alexandrov N.A."/>
            <person name="Lu Y.-P."/>
            <person name="Flavell R.B."/>
            <person name="Feldmann K.A."/>
        </authorList>
    </citation>
    <scope>NUCLEOTIDE SEQUENCE [LARGE SCALE MRNA]</scope>
</reference>
<reference key="7">
    <citation type="journal article" date="2007" name="Trends Plant Sci.">
        <title>Arabidopsis PPP family of serine/threonine phosphatases.</title>
        <authorList>
            <person name="Farkas I."/>
            <person name="Dombradi V."/>
            <person name="Miskei M."/>
            <person name="Szabados L."/>
            <person name="Koncz C."/>
        </authorList>
    </citation>
    <scope>GENE FAMILY</scope>
    <scope>NOMENCLATURE</scope>
</reference>
<reference key="8">
    <citation type="journal article" date="2009" name="Plant Physiol.">
        <title>Identification and functional characterization of inhibitor-3, a regulatory subunit of protein phosphatase 1 in plants.</title>
        <authorList>
            <person name="Takemiya A."/>
            <person name="Ariyoshi C."/>
            <person name="Shimazaki K."/>
        </authorList>
    </citation>
    <scope>SUBCELLULAR LOCATION</scope>
</reference>
<reference key="9">
    <citation type="journal article" date="2011" name="Biochem. J.">
        <title>Identification and characterization of AtI-2, an Arabidopsis homologue of an ancient protein phosphatase 1 (PP1) regulatory subunit.</title>
        <authorList>
            <person name="Templeton G.W."/>
            <person name="Nimick M."/>
            <person name="Morrice N."/>
            <person name="Campbell D."/>
            <person name="Goudreault M."/>
            <person name="Gingras A.C."/>
            <person name="Takemiya A."/>
            <person name="Shimazaki K."/>
            <person name="Moorhead G.B."/>
        </authorList>
    </citation>
    <scope>IDENTIFICATION BY MASS SPECTROMETRY</scope>
    <scope>FUNCTION</scope>
    <scope>CATALYTIC ACTIVITY</scope>
    <scope>ACTIVITY REGULATION</scope>
</reference>
<reference key="10">
    <citation type="journal article" date="2012" name="Mol. Cell. Proteomics">
        <title>Comparative large-scale characterisation of plant vs. mammal proteins reveals similar and idiosyncratic N-alpha acetylation features.</title>
        <authorList>
            <person name="Bienvenut W.V."/>
            <person name="Sumpton D."/>
            <person name="Martinez A."/>
            <person name="Lilla S."/>
            <person name="Espagne C."/>
            <person name="Meinnel T."/>
            <person name="Giglione C."/>
        </authorList>
    </citation>
    <scope>ACETYLATION [LARGE SCALE ANALYSIS] AT MET-1</scope>
    <scope>IDENTIFICATION BY MASS SPECTROMETRY [LARGE SCALE ANALYSIS]</scope>
</reference>
<proteinExistence type="evidence at protein level"/>